<dbReference type="EMBL" id="AB042647">
    <property type="protein sequence ID" value="BAB40981.1"/>
    <property type="molecule type" value="mRNA"/>
</dbReference>
<dbReference type="EMBL" id="AK294757">
    <property type="protein sequence ID" value="BAH11871.1"/>
    <property type="molecule type" value="mRNA"/>
</dbReference>
<dbReference type="EMBL" id="AK054702">
    <property type="protein sequence ID" value="BAB70797.1"/>
    <property type="molecule type" value="mRNA"/>
</dbReference>
<dbReference type="EMBL" id="AK295666">
    <property type="protein sequence ID" value="BAH12148.1"/>
    <property type="molecule type" value="mRNA"/>
</dbReference>
<dbReference type="EMBL" id="AC015864">
    <property type="status" value="NOT_ANNOTATED_CDS"/>
    <property type="molecule type" value="Genomic_DNA"/>
</dbReference>
<dbReference type="EMBL" id="BC029860">
    <property type="protein sequence ID" value="AAH29860.1"/>
    <property type="molecule type" value="mRNA"/>
</dbReference>
<dbReference type="CCDS" id="CCDS11947.1">
    <molecule id="Q9BYG7-1"/>
</dbReference>
<dbReference type="CCDS" id="CCDS45867.1">
    <molecule id="Q9BYG7-2"/>
</dbReference>
<dbReference type="CCDS" id="CCDS45868.1">
    <molecule id="Q9BYG7-5"/>
</dbReference>
<dbReference type="CCDS" id="CCDS45869.1">
    <molecule id="Q9BYG7-6"/>
</dbReference>
<dbReference type="RefSeq" id="NP_001120646.1">
    <molecule id="Q9BYG7-6"/>
    <property type="nucleotide sequence ID" value="NM_001127174.3"/>
</dbReference>
<dbReference type="RefSeq" id="NP_001120647.1">
    <molecule id="Q9BYG7-2"/>
    <property type="nucleotide sequence ID" value="NM_001127175.3"/>
</dbReference>
<dbReference type="RefSeq" id="NP_001120648.1">
    <molecule id="Q9BYG7-5"/>
    <property type="nucleotide sequence ID" value="NM_001127176.3"/>
</dbReference>
<dbReference type="RefSeq" id="NP_001356437.1">
    <molecule id="Q9BYG7-1"/>
    <property type="nucleotide sequence ID" value="NM_001369508.2"/>
</dbReference>
<dbReference type="RefSeq" id="NP_001356439.1">
    <molecule id="Q9BYG7-1"/>
    <property type="nucleotide sequence ID" value="NM_001369510.2"/>
</dbReference>
<dbReference type="RefSeq" id="NP_001356440.1">
    <molecule id="Q9BYG7-6"/>
    <property type="nucleotide sequence ID" value="NM_001369511.2"/>
</dbReference>
<dbReference type="RefSeq" id="NP_001356444.1">
    <molecule id="Q9BYG7-6"/>
    <property type="nucleotide sequence ID" value="NM_001369515.2"/>
</dbReference>
<dbReference type="RefSeq" id="NP_114145.2">
    <molecule id="Q9BYG7-1"/>
    <property type="nucleotide sequence ID" value="NM_031939.6"/>
</dbReference>
<dbReference type="RefSeq" id="XP_005258422.1">
    <property type="nucleotide sequence ID" value="XM_005258365.3"/>
</dbReference>
<dbReference type="RefSeq" id="XP_011524528.1">
    <molecule id="Q9BYG7-6"/>
    <property type="nucleotide sequence ID" value="XM_011526226.4"/>
</dbReference>
<dbReference type="RefSeq" id="XP_016881524.1">
    <molecule id="Q9BYG7-1"/>
    <property type="nucleotide sequence ID" value="XM_017026035.3"/>
</dbReference>
<dbReference type="RefSeq" id="XP_016881525.1">
    <property type="nucleotide sequence ID" value="XM_017026036.1"/>
</dbReference>
<dbReference type="RefSeq" id="XP_016881526.1">
    <property type="nucleotide sequence ID" value="XM_017026037.1"/>
</dbReference>
<dbReference type="RefSeq" id="XP_047293838.1">
    <molecule id="Q9BYG7-1"/>
    <property type="nucleotide sequence ID" value="XM_047437882.1"/>
</dbReference>
<dbReference type="SMR" id="Q9BYG7"/>
<dbReference type="BioGRID" id="123789">
    <property type="interactions" value="3"/>
</dbReference>
<dbReference type="FunCoup" id="Q9BYG7">
    <property type="interactions" value="10"/>
</dbReference>
<dbReference type="STRING" id="9606.ENSP00000397900"/>
<dbReference type="GlyGen" id="Q9BYG7">
    <property type="glycosylation" value="2 sites, 1 O-linked glycan (2 sites)"/>
</dbReference>
<dbReference type="iPTMnet" id="Q9BYG7"/>
<dbReference type="PhosphoSitePlus" id="Q9BYG7"/>
<dbReference type="BioMuta" id="MRO"/>
<dbReference type="DMDM" id="161789016"/>
<dbReference type="MassIVE" id="Q9BYG7"/>
<dbReference type="PaxDb" id="9606-ENSP00000397900"/>
<dbReference type="PeptideAtlas" id="Q9BYG7"/>
<dbReference type="Antibodypedia" id="58882">
    <property type="antibodies" value="26 antibodies from 10 providers"/>
</dbReference>
<dbReference type="DNASU" id="83876"/>
<dbReference type="Ensembl" id="ENST00000256425.6">
    <molecule id="Q9BYG7-1"/>
    <property type="protein sequence ID" value="ENSP00000256425.2"/>
    <property type="gene ID" value="ENSG00000134042.14"/>
</dbReference>
<dbReference type="Ensembl" id="ENST00000398439.8">
    <molecule id="Q9BYG7-1"/>
    <property type="protein sequence ID" value="ENSP00000381465.2"/>
    <property type="gene ID" value="ENSG00000134042.14"/>
</dbReference>
<dbReference type="Ensembl" id="ENST00000428869.6">
    <molecule id="Q9BYG7-1"/>
    <property type="protein sequence ID" value="ENSP00000409509.2"/>
    <property type="gene ID" value="ENSG00000134042.14"/>
</dbReference>
<dbReference type="Ensembl" id="ENST00000431965.6">
    <molecule id="Q9BYG7-2"/>
    <property type="protein sequence ID" value="ENSP00000392614.1"/>
    <property type="gene ID" value="ENSG00000134042.14"/>
</dbReference>
<dbReference type="Ensembl" id="ENST00000436348.6">
    <molecule id="Q9BYG7-5"/>
    <property type="protein sequence ID" value="ENSP00000397900.1"/>
    <property type="gene ID" value="ENSG00000134042.14"/>
</dbReference>
<dbReference type="Ensembl" id="ENST00000588444.5">
    <molecule id="Q9BYG7-6"/>
    <property type="protein sequence ID" value="ENSP00000465653.1"/>
    <property type="gene ID" value="ENSG00000134042.14"/>
</dbReference>
<dbReference type="GeneID" id="83876"/>
<dbReference type="KEGG" id="hsa:83876"/>
<dbReference type="MANE-Select" id="ENST00000398439.8">
    <property type="protein sequence ID" value="ENSP00000381465.2"/>
    <property type="RefSeq nucleotide sequence ID" value="NM_031939.6"/>
    <property type="RefSeq protein sequence ID" value="NP_114145.2"/>
</dbReference>
<dbReference type="UCSC" id="uc002lew.5">
    <molecule id="Q9BYG7-1"/>
    <property type="organism name" value="human"/>
</dbReference>
<dbReference type="AGR" id="HGNC:24121"/>
<dbReference type="CTD" id="83876"/>
<dbReference type="DisGeNET" id="83876"/>
<dbReference type="GeneCards" id="MRO"/>
<dbReference type="HGNC" id="HGNC:24121">
    <property type="gene designation" value="MRO"/>
</dbReference>
<dbReference type="HPA" id="ENSG00000134042">
    <property type="expression patterns" value="Tissue enhanced (brain, kidney, testis)"/>
</dbReference>
<dbReference type="MIM" id="608080">
    <property type="type" value="gene"/>
</dbReference>
<dbReference type="neXtProt" id="NX_Q9BYG7"/>
<dbReference type="OpenTargets" id="ENSG00000134042"/>
<dbReference type="PharmGKB" id="PA134932281"/>
<dbReference type="VEuPathDB" id="HostDB:ENSG00000134042"/>
<dbReference type="eggNOG" id="KOG2032">
    <property type="taxonomic scope" value="Eukaryota"/>
</dbReference>
<dbReference type="GeneTree" id="ENSGT00940000161642"/>
<dbReference type="HOGENOM" id="CLU_099676_0_0_1"/>
<dbReference type="InParanoid" id="Q9BYG7"/>
<dbReference type="OMA" id="PMMSFFS"/>
<dbReference type="OrthoDB" id="1884734at2759"/>
<dbReference type="PAN-GO" id="Q9BYG7">
    <property type="GO annotations" value="0 GO annotations based on evolutionary models"/>
</dbReference>
<dbReference type="PhylomeDB" id="Q9BYG7"/>
<dbReference type="TreeFam" id="TF343191"/>
<dbReference type="PathwayCommons" id="Q9BYG7"/>
<dbReference type="BioGRID-ORCS" id="83876">
    <property type="hits" value="6 hits in 1147 CRISPR screens"/>
</dbReference>
<dbReference type="ChiTaRS" id="MRO">
    <property type="organism name" value="human"/>
</dbReference>
<dbReference type="GenomeRNAi" id="83876"/>
<dbReference type="Pharos" id="Q9BYG7">
    <property type="development level" value="Tdark"/>
</dbReference>
<dbReference type="PRO" id="PR:Q9BYG7"/>
<dbReference type="Proteomes" id="UP000005640">
    <property type="component" value="Chromosome 18"/>
</dbReference>
<dbReference type="RNAct" id="Q9BYG7">
    <property type="molecule type" value="protein"/>
</dbReference>
<dbReference type="Bgee" id="ENSG00000134042">
    <property type="expression patterns" value="Expressed in medial globus pallidus and 155 other cell types or tissues"/>
</dbReference>
<dbReference type="ExpressionAtlas" id="Q9BYG7">
    <property type="expression patterns" value="baseline and differential"/>
</dbReference>
<dbReference type="GO" id="GO:0005730">
    <property type="term" value="C:nucleolus"/>
    <property type="evidence" value="ECO:0007669"/>
    <property type="project" value="UniProtKB-SubCell"/>
</dbReference>
<dbReference type="Gene3D" id="1.25.10.10">
    <property type="entry name" value="Leucine-rich Repeat Variant"/>
    <property type="match status" value="1"/>
</dbReference>
<dbReference type="InterPro" id="IPR011989">
    <property type="entry name" value="ARM-like"/>
</dbReference>
<dbReference type="InterPro" id="IPR016024">
    <property type="entry name" value="ARM-type_fold"/>
</dbReference>
<dbReference type="InterPro" id="IPR055406">
    <property type="entry name" value="HEAT_Maestro"/>
</dbReference>
<dbReference type="InterPro" id="IPR045206">
    <property type="entry name" value="Maestro_heat-like_prot"/>
</dbReference>
<dbReference type="PANTHER" id="PTHR23120:SF39">
    <property type="entry name" value="MAESTRO"/>
    <property type="match status" value="1"/>
</dbReference>
<dbReference type="PANTHER" id="PTHR23120">
    <property type="entry name" value="MAESTRO-RELATED HEAT DOMAIN-CONTAINING"/>
    <property type="match status" value="1"/>
</dbReference>
<dbReference type="Pfam" id="PF23227">
    <property type="entry name" value="HEAT_MROH2B_C"/>
    <property type="match status" value="1"/>
</dbReference>
<dbReference type="SUPFAM" id="SSF48371">
    <property type="entry name" value="ARM repeat"/>
    <property type="match status" value="1"/>
</dbReference>
<protein>
    <recommendedName>
        <fullName>Protein maestro</fullName>
    </recommendedName>
    <alternativeName>
        <fullName>Male-specific transcription in the developing reproductive organs</fullName>
    </alternativeName>
    <alternativeName>
        <fullName>Protein B29</fullName>
    </alternativeName>
</protein>
<keyword id="KW-0025">Alternative splicing</keyword>
<keyword id="KW-0539">Nucleus</keyword>
<keyword id="KW-1267">Proteomics identification</keyword>
<keyword id="KW-1185">Reference proteome</keyword>
<name>MSTRO_HUMAN</name>
<reference key="1">
    <citation type="journal article" date="2001" name="Genomics">
        <title>Physical and transcriptional map of a 311-kb segment of chromosome 18q21, a candidate lung tumor suppressor locus.</title>
        <authorList>
            <person name="Yanaihara N."/>
            <person name="Kohno T."/>
            <person name="Takakura S."/>
            <person name="Takei K."/>
            <person name="Otsuka A."/>
            <person name="Sunaga N."/>
            <person name="Takahashi M."/>
            <person name="Yamazaki M."/>
            <person name="Tashiro H."/>
            <person name="Fukuzumi Y."/>
            <person name="Fujimori Y."/>
            <person name="Hagiwara K."/>
            <person name="Tanaka T."/>
            <person name="Yokota J."/>
        </authorList>
    </citation>
    <scope>NUCLEOTIDE SEQUENCE [MRNA] (ISOFORM 1)</scope>
    <scope>ALTERNATIVE SPLICING</scope>
    <scope>TISSUE SPECIFICITY</scope>
    <scope>VARIANT ALA-134</scope>
    <source>
        <tissue>Brain</tissue>
    </source>
</reference>
<reference key="2">
    <citation type="journal article" date="2004" name="Nat. Genet.">
        <title>Complete sequencing and characterization of 21,243 full-length human cDNAs.</title>
        <authorList>
            <person name="Ota T."/>
            <person name="Suzuki Y."/>
            <person name="Nishikawa T."/>
            <person name="Otsuki T."/>
            <person name="Sugiyama T."/>
            <person name="Irie R."/>
            <person name="Wakamatsu A."/>
            <person name="Hayashi K."/>
            <person name="Sato H."/>
            <person name="Nagai K."/>
            <person name="Kimura K."/>
            <person name="Makita H."/>
            <person name="Sekine M."/>
            <person name="Obayashi M."/>
            <person name="Nishi T."/>
            <person name="Shibahara T."/>
            <person name="Tanaka T."/>
            <person name="Ishii S."/>
            <person name="Yamamoto J."/>
            <person name="Saito K."/>
            <person name="Kawai Y."/>
            <person name="Isono Y."/>
            <person name="Nakamura Y."/>
            <person name="Nagahari K."/>
            <person name="Murakami K."/>
            <person name="Yasuda T."/>
            <person name="Iwayanagi T."/>
            <person name="Wagatsuma M."/>
            <person name="Shiratori A."/>
            <person name="Sudo H."/>
            <person name="Hosoiri T."/>
            <person name="Kaku Y."/>
            <person name="Kodaira H."/>
            <person name="Kondo H."/>
            <person name="Sugawara M."/>
            <person name="Takahashi M."/>
            <person name="Kanda K."/>
            <person name="Yokoi T."/>
            <person name="Furuya T."/>
            <person name="Kikkawa E."/>
            <person name="Omura Y."/>
            <person name="Abe K."/>
            <person name="Kamihara K."/>
            <person name="Katsuta N."/>
            <person name="Sato K."/>
            <person name="Tanikawa M."/>
            <person name="Yamazaki M."/>
            <person name="Ninomiya K."/>
            <person name="Ishibashi T."/>
            <person name="Yamashita H."/>
            <person name="Murakawa K."/>
            <person name="Fujimori K."/>
            <person name="Tanai H."/>
            <person name="Kimata M."/>
            <person name="Watanabe M."/>
            <person name="Hiraoka S."/>
            <person name="Chiba Y."/>
            <person name="Ishida S."/>
            <person name="Ono Y."/>
            <person name="Takiguchi S."/>
            <person name="Watanabe S."/>
            <person name="Yosida M."/>
            <person name="Hotuta T."/>
            <person name="Kusano J."/>
            <person name="Kanehori K."/>
            <person name="Takahashi-Fujii A."/>
            <person name="Hara H."/>
            <person name="Tanase T.-O."/>
            <person name="Nomura Y."/>
            <person name="Togiya S."/>
            <person name="Komai F."/>
            <person name="Hara R."/>
            <person name="Takeuchi K."/>
            <person name="Arita M."/>
            <person name="Imose N."/>
            <person name="Musashino K."/>
            <person name="Yuuki H."/>
            <person name="Oshima A."/>
            <person name="Sasaki N."/>
            <person name="Aotsuka S."/>
            <person name="Yoshikawa Y."/>
            <person name="Matsunawa H."/>
            <person name="Ichihara T."/>
            <person name="Shiohata N."/>
            <person name="Sano S."/>
            <person name="Moriya S."/>
            <person name="Momiyama H."/>
            <person name="Satoh N."/>
            <person name="Takami S."/>
            <person name="Terashima Y."/>
            <person name="Suzuki O."/>
            <person name="Nakagawa S."/>
            <person name="Senoh A."/>
            <person name="Mizoguchi H."/>
            <person name="Goto Y."/>
            <person name="Shimizu F."/>
            <person name="Wakebe H."/>
            <person name="Hishigaki H."/>
            <person name="Watanabe T."/>
            <person name="Sugiyama A."/>
            <person name="Takemoto M."/>
            <person name="Kawakami B."/>
            <person name="Yamazaki M."/>
            <person name="Watanabe K."/>
            <person name="Kumagai A."/>
            <person name="Itakura S."/>
            <person name="Fukuzumi Y."/>
            <person name="Fujimori Y."/>
            <person name="Komiyama M."/>
            <person name="Tashiro H."/>
            <person name="Tanigami A."/>
            <person name="Fujiwara T."/>
            <person name="Ono T."/>
            <person name="Yamada K."/>
            <person name="Fujii Y."/>
            <person name="Ozaki K."/>
            <person name="Hirao M."/>
            <person name="Ohmori Y."/>
            <person name="Kawabata A."/>
            <person name="Hikiji T."/>
            <person name="Kobatake N."/>
            <person name="Inagaki H."/>
            <person name="Ikema Y."/>
            <person name="Okamoto S."/>
            <person name="Okitani R."/>
            <person name="Kawakami T."/>
            <person name="Noguchi S."/>
            <person name="Itoh T."/>
            <person name="Shigeta K."/>
            <person name="Senba T."/>
            <person name="Matsumura K."/>
            <person name="Nakajima Y."/>
            <person name="Mizuno T."/>
            <person name="Morinaga M."/>
            <person name="Sasaki M."/>
            <person name="Togashi T."/>
            <person name="Oyama M."/>
            <person name="Hata H."/>
            <person name="Watanabe M."/>
            <person name="Komatsu T."/>
            <person name="Mizushima-Sugano J."/>
            <person name="Satoh T."/>
            <person name="Shirai Y."/>
            <person name="Takahashi Y."/>
            <person name="Nakagawa K."/>
            <person name="Okumura K."/>
            <person name="Nagase T."/>
            <person name="Nomura N."/>
            <person name="Kikuchi H."/>
            <person name="Masuho Y."/>
            <person name="Yamashita R."/>
            <person name="Nakai K."/>
            <person name="Yada T."/>
            <person name="Nakamura Y."/>
            <person name="Ohara O."/>
            <person name="Isogai T."/>
            <person name="Sugano S."/>
        </authorList>
    </citation>
    <scope>NUCLEOTIDE SEQUENCE [LARGE SCALE MRNA] (ISOFORMS 1; 2 AND 6)</scope>
    <scope>VARIANTS SER-39 AND ALA-134</scope>
    <source>
        <tissue>Brain</tissue>
        <tissue>Cerebellum</tissue>
        <tissue>Hippocampus</tissue>
    </source>
</reference>
<reference key="3">
    <citation type="journal article" date="2005" name="Nature">
        <title>DNA sequence and analysis of human chromosome 18.</title>
        <authorList>
            <person name="Nusbaum C."/>
            <person name="Zody M.C."/>
            <person name="Borowsky M.L."/>
            <person name="Kamal M."/>
            <person name="Kodira C.D."/>
            <person name="Taylor T.D."/>
            <person name="Whittaker C.A."/>
            <person name="Chang J.L."/>
            <person name="Cuomo C.A."/>
            <person name="Dewar K."/>
            <person name="FitzGerald M.G."/>
            <person name="Yang X."/>
            <person name="Abouelleil A."/>
            <person name="Allen N.R."/>
            <person name="Anderson S."/>
            <person name="Bloom T."/>
            <person name="Bugalter B."/>
            <person name="Butler J."/>
            <person name="Cook A."/>
            <person name="DeCaprio D."/>
            <person name="Engels R."/>
            <person name="Garber M."/>
            <person name="Gnirke A."/>
            <person name="Hafez N."/>
            <person name="Hall J.L."/>
            <person name="Norman C.H."/>
            <person name="Itoh T."/>
            <person name="Jaffe D.B."/>
            <person name="Kuroki Y."/>
            <person name="Lehoczky J."/>
            <person name="Lui A."/>
            <person name="Macdonald P."/>
            <person name="Mauceli E."/>
            <person name="Mikkelsen T.S."/>
            <person name="Naylor J.W."/>
            <person name="Nicol R."/>
            <person name="Nguyen C."/>
            <person name="Noguchi H."/>
            <person name="O'Leary S.B."/>
            <person name="Piqani B."/>
            <person name="Smith C.L."/>
            <person name="Talamas J.A."/>
            <person name="Topham K."/>
            <person name="Totoki Y."/>
            <person name="Toyoda A."/>
            <person name="Wain H.M."/>
            <person name="Young S.K."/>
            <person name="Zeng Q."/>
            <person name="Zimmer A.R."/>
            <person name="Fujiyama A."/>
            <person name="Hattori M."/>
            <person name="Birren B.W."/>
            <person name="Sakaki Y."/>
            <person name="Lander E.S."/>
        </authorList>
    </citation>
    <scope>NUCLEOTIDE SEQUENCE [LARGE SCALE GENOMIC DNA]</scope>
</reference>
<reference key="4">
    <citation type="journal article" date="2004" name="Genome Res.">
        <title>The status, quality, and expansion of the NIH full-length cDNA project: the Mammalian Gene Collection (MGC).</title>
        <authorList>
            <consortium name="The MGC Project Team"/>
        </authorList>
    </citation>
    <scope>NUCLEOTIDE SEQUENCE [LARGE SCALE MRNA] (ISOFORM 1)</scope>
    <scope>VARIANT ALA-134</scope>
    <source>
        <tissue>Brain</tissue>
    </source>
</reference>
<gene>
    <name type="primary">MRO</name>
    <name type="synonym">B29</name>
    <name type="synonym">C18orf3</name>
</gene>
<sequence>MDQRQRRILGQPLSIPTSQPKQKRTSMISFFSKVSWKLRFQKREPLKNVFFILAERARDPSAKKRHMAMRNLGTMAYEAPDKVRKYKKIVLDLLVYGLYDPVNLEVIHESMKTLTVVLGKIQGKGLGSFFIDITLQTRTLLDDENDSLRYSAFVLFGQLAAFAGRKWKKFFTSQVKQTRDSLLIHLQDRNPQVAKACKTTFQACSPYLKLKEEYSFQSEEDQRNTKLYQQLSHYHPEILQFFYANKIL</sequence>
<comment type="subcellular location">
    <subcellularLocation>
        <location evidence="1">Nucleus</location>
        <location evidence="1">Nucleolus</location>
    </subcellularLocation>
</comment>
<comment type="alternative products">
    <event type="alternative splicing"/>
    <isoform>
        <id>Q9BYG7-1</id>
        <name>1</name>
        <sequence type="displayed"/>
    </isoform>
    <isoform>
        <id>Q9BYG7-2</id>
        <name>2</name>
        <sequence type="described" ref="VSP_045711 VSP_045712"/>
    </isoform>
    <isoform>
        <id>Q9BYG7-3</id>
        <name>3</name>
        <sequence type="not described"/>
    </isoform>
    <isoform>
        <id>Q9BYG7-4</id>
        <name>4</name>
        <sequence type="not described"/>
    </isoform>
    <isoform>
        <id>Q9BYG7-5</id>
        <name>5</name>
        <sequence type="described" ref="VSP_045711"/>
    </isoform>
    <isoform>
        <id>Q9BYG7-6</id>
        <name>6</name>
        <sequence type="described" ref="VSP_045712"/>
    </isoform>
</comment>
<comment type="tissue specificity">
    <text evidence="3">Ubiquitous.</text>
</comment>
<accession>Q9BYG7</accession>
<accession>B7Z2I5</accession>
<accession>B7Z3B2</accession>
<accession>E9PAT5</accession>
<accession>E9PBI3</accession>
<accession>K7EKJ8</accession>
<accession>Q8N6K5</accession>
<feature type="chain" id="PRO_0000248197" description="Protein maestro">
    <location>
        <begin position="1"/>
        <end position="248"/>
    </location>
</feature>
<feature type="repeat" description="HEAT">
    <location>
        <begin position="128"/>
        <end position="163"/>
    </location>
</feature>
<feature type="region of interest" description="Disordered" evidence="2">
    <location>
        <begin position="1"/>
        <end position="21"/>
    </location>
</feature>
<feature type="splice variant" id="VSP_045711" description="In isoform 2 and isoform 5." evidence="6">
    <original>MDQRQRRILGQPLSIPTSQPKQKRTSMISFFSK</original>
    <variation>MAWGSKGIQGWENLAESSHLATTRESSPPESGTGSGSSRGSRLQEPQ</variation>
    <location>
        <begin position="1"/>
        <end position="33"/>
    </location>
</feature>
<feature type="splice variant" id="VSP_045712" description="In isoform 2 and isoform 6." evidence="6">
    <location>
        <begin position="144"/>
        <end position="195"/>
    </location>
</feature>
<feature type="sequence variant" id="VAR_027261" description="In dbSNP:rs4940019." evidence="4">
    <original>R</original>
    <variation>S</variation>
    <location>
        <position position="39"/>
    </location>
</feature>
<feature type="sequence variant" id="VAR_027262" description="In dbSNP:rs2849233." evidence="3 4 5">
    <original>T</original>
    <variation>A</variation>
    <location>
        <position position="134"/>
    </location>
</feature>
<organism>
    <name type="scientific">Homo sapiens</name>
    <name type="common">Human</name>
    <dbReference type="NCBI Taxonomy" id="9606"/>
    <lineage>
        <taxon>Eukaryota</taxon>
        <taxon>Metazoa</taxon>
        <taxon>Chordata</taxon>
        <taxon>Craniata</taxon>
        <taxon>Vertebrata</taxon>
        <taxon>Euteleostomi</taxon>
        <taxon>Mammalia</taxon>
        <taxon>Eutheria</taxon>
        <taxon>Euarchontoglires</taxon>
        <taxon>Primates</taxon>
        <taxon>Haplorrhini</taxon>
        <taxon>Catarrhini</taxon>
        <taxon>Hominidae</taxon>
        <taxon>Homo</taxon>
    </lineage>
</organism>
<evidence type="ECO:0000250" key="1"/>
<evidence type="ECO:0000256" key="2">
    <source>
        <dbReference type="SAM" id="MobiDB-lite"/>
    </source>
</evidence>
<evidence type="ECO:0000269" key="3">
    <source>
    </source>
</evidence>
<evidence type="ECO:0000269" key="4">
    <source>
    </source>
</evidence>
<evidence type="ECO:0000269" key="5">
    <source>
    </source>
</evidence>
<evidence type="ECO:0000303" key="6">
    <source>
    </source>
</evidence>
<proteinExistence type="evidence at protein level"/>